<gene>
    <name type="primary">shh</name>
</gene>
<keyword id="KW-0068">Autocatalytic cleavage</keyword>
<keyword id="KW-0106">Calcium</keyword>
<keyword id="KW-1003">Cell membrane</keyword>
<keyword id="KW-0217">Developmental protein</keyword>
<keyword id="KW-0378">Hydrolase</keyword>
<keyword id="KW-0449">Lipoprotein</keyword>
<keyword id="KW-0472">Membrane</keyword>
<keyword id="KW-0479">Metal-binding</keyword>
<keyword id="KW-0564">Palmitate</keyword>
<keyword id="KW-0645">Protease</keyword>
<keyword id="KW-0964">Secreted</keyword>
<keyword id="KW-0862">Zinc</keyword>
<feature type="chain" id="PRO_0000058721" description="Sonic hedgehog protein">
    <location>
        <begin position="1" status="less than"/>
        <end position="121" status="greater than"/>
    </location>
</feature>
<feature type="binding site" evidence="2">
    <location>
        <position position="60"/>
    </location>
    <ligand>
        <name>Ca(2+)</name>
        <dbReference type="ChEBI" id="CHEBI:29108"/>
        <label>1</label>
    </ligand>
</feature>
<feature type="binding site" evidence="2">
    <location>
        <position position="61"/>
    </location>
    <ligand>
        <name>Ca(2+)</name>
        <dbReference type="ChEBI" id="CHEBI:29108"/>
        <label>1</label>
    </ligand>
</feature>
<feature type="binding site" evidence="2">
    <location>
        <position position="61"/>
    </location>
    <ligand>
        <name>Ca(2+)</name>
        <dbReference type="ChEBI" id="CHEBI:29108"/>
        <label>2</label>
    </ligand>
</feature>
<feature type="binding site" evidence="2">
    <location>
        <position position="76"/>
    </location>
    <ligand>
        <name>Ca(2+)</name>
        <dbReference type="ChEBI" id="CHEBI:29108"/>
        <label>1</label>
    </ligand>
</feature>
<feature type="binding site" evidence="2">
    <location>
        <position position="77"/>
    </location>
    <ligand>
        <name>Ca(2+)</name>
        <dbReference type="ChEBI" id="CHEBI:29108"/>
        <label>1</label>
    </ligand>
</feature>
<feature type="binding site" evidence="2">
    <location>
        <position position="77"/>
    </location>
    <ligand>
        <name>Ca(2+)</name>
        <dbReference type="ChEBI" id="CHEBI:29108"/>
        <label>2</label>
    </ligand>
</feature>
<feature type="binding site" evidence="2">
    <location>
        <position position="80"/>
    </location>
    <ligand>
        <name>Ca(2+)</name>
        <dbReference type="ChEBI" id="CHEBI:29108"/>
        <label>2</label>
    </ligand>
</feature>
<feature type="binding site" evidence="2">
    <location>
        <position position="82"/>
    </location>
    <ligand>
        <name>Ca(2+)</name>
        <dbReference type="ChEBI" id="CHEBI:29108"/>
        <label>2</label>
    </ligand>
</feature>
<feature type="binding site" evidence="2">
    <location>
        <position position="91"/>
    </location>
    <ligand>
        <name>Zn(2+)</name>
        <dbReference type="ChEBI" id="CHEBI:29105"/>
    </ligand>
</feature>
<feature type="binding site" evidence="2">
    <location>
        <position position="98"/>
    </location>
    <ligand>
        <name>Zn(2+)</name>
        <dbReference type="ChEBI" id="CHEBI:29105"/>
    </ligand>
</feature>
<feature type="non-consecutive residues" evidence="3">
    <location>
        <begin position="63"/>
        <end position="64"/>
    </location>
</feature>
<feature type="non-terminal residue">
    <location>
        <position position="1"/>
    </location>
</feature>
<feature type="non-terminal residue">
    <location>
        <position position="121"/>
    </location>
</feature>
<proteinExistence type="inferred from homology"/>
<evidence type="ECO:0000250" key="1"/>
<evidence type="ECO:0000250" key="2">
    <source>
        <dbReference type="UniProtKB" id="Q15465"/>
    </source>
</evidence>
<evidence type="ECO:0000305" key="3"/>
<accession>P79682</accession>
<accession>P79683</accession>
<sequence>YDKRRHPKKLTPLAYKQFIPNVAEKTLGASGRYEGKITRNSERFKELTPNYNPDIIFKDEENTVMNQWPGVKLRVTEGWDEDGHHFEESLHYEGRAVDITTSDRDKSKYGTLSRLAVEAGF</sequence>
<protein>
    <recommendedName>
        <fullName>Sonic hedgehog protein</fullName>
        <shortName>SHH</shortName>
    </recommendedName>
</protein>
<reference key="1">
    <citation type="journal article" date="1996" name="Proc. Natl. Acad. Sci. U.S.A.">
        <title>Evolutionary analyses of hedgehog and Hoxd-10 genes in fish species closely related to the zebrafish.</title>
        <authorList>
            <person name="Zardoya R."/>
            <person name="Abouheif E."/>
            <person name="Meyer A."/>
        </authorList>
    </citation>
    <scope>NUCLEOTIDE SEQUENCE [GENOMIC DNA]</scope>
    <source>
        <tissue>Muscle</tissue>
    </source>
</reference>
<comment type="function">
    <text evidence="1">Intercellular signal essential for a variety of patterning events during development. Signal produced by the notochord that induces somite patterning, dorso-ventral patterning of the brain and early patterning of the developing eyes. Displays floor plate-inducing activity. Binds to the patched (PTC) receptor, which functions in association with smoothened (SMO), to activate the transcription of target genes. In the absence of SHH, PTC represses the constitutive signaling activity of SMO (By similarity).</text>
</comment>
<comment type="subunit">
    <text evidence="1">N-product is active as a multimer.</text>
</comment>
<comment type="subcellular location">
    <subcellularLocation>
        <location evidence="1">Secreted</location>
    </subcellularLocation>
    <subcellularLocation>
        <location evidence="1">Cell membrane</location>
    </subcellularLocation>
    <text evidence="1">Sonic hedgehog protein C-product: Secreted, extracellular space. Sonic hedgehog protein N-product: Cell membrane; Lipid-anchor. The C-terminal peptide diffuses from the cell, while the N-product either remains associated with lipid rafts at the cell surface, or forms freely diffusible active multimers with its hydrophobic lipid-modified N- and C-termini buried inside.</text>
</comment>
<comment type="domain">
    <text evidence="1">The sonic hedgehog protein N-product binds calcium and zinc ions; this stabilizes the protein fold and is essential for protein-protein interactions mediated by this domain.</text>
</comment>
<comment type="PTM">
    <text>The C-terminal domain displays an autoproteolysis activity and a cholesterol transferase activity. Both activities result in the cleavage of the full-length protein and covalent attachment of a cholesterol moiety to the C-terminal of the newly generated N-terminal fragment (N-product). The N-product is the active species in both local and long-range signaling, whereas the C-product has no signaling activity.</text>
</comment>
<comment type="PTM">
    <text evidence="1">Cholesterylation is required for N-product targeting to lipid rafts and multimerization.</text>
</comment>
<comment type="PTM">
    <text evidence="1">N-palmitoylation is required for N-product multimerization and full activity.</text>
</comment>
<comment type="similarity">
    <text evidence="3">Belongs to the hedgehog family.</text>
</comment>
<dbReference type="EMBL" id="U51341">
    <property type="protein sequence ID" value="AAB38564.1"/>
    <property type="molecule type" value="Genomic_DNA"/>
</dbReference>
<dbReference type="EMBL" id="U51360">
    <property type="protein sequence ID" value="AAB38582.1"/>
    <property type="molecule type" value="Genomic_DNA"/>
</dbReference>
<dbReference type="SMR" id="P79682"/>
<dbReference type="GO" id="GO:0005615">
    <property type="term" value="C:extracellular space"/>
    <property type="evidence" value="ECO:0007669"/>
    <property type="project" value="TreeGrafter"/>
</dbReference>
<dbReference type="GO" id="GO:0005886">
    <property type="term" value="C:plasma membrane"/>
    <property type="evidence" value="ECO:0007669"/>
    <property type="project" value="UniProtKB-SubCell"/>
</dbReference>
<dbReference type="GO" id="GO:0005509">
    <property type="term" value="F:calcium ion binding"/>
    <property type="evidence" value="ECO:0007669"/>
    <property type="project" value="TreeGrafter"/>
</dbReference>
<dbReference type="GO" id="GO:0005113">
    <property type="term" value="F:patched binding"/>
    <property type="evidence" value="ECO:0007669"/>
    <property type="project" value="TreeGrafter"/>
</dbReference>
<dbReference type="GO" id="GO:0008233">
    <property type="term" value="F:peptidase activity"/>
    <property type="evidence" value="ECO:0007669"/>
    <property type="project" value="UniProtKB-KW"/>
</dbReference>
<dbReference type="GO" id="GO:0048513">
    <property type="term" value="P:animal organ development"/>
    <property type="evidence" value="ECO:0007669"/>
    <property type="project" value="UniProtKB-ARBA"/>
</dbReference>
<dbReference type="GO" id="GO:0048468">
    <property type="term" value="P:cell development"/>
    <property type="evidence" value="ECO:0007669"/>
    <property type="project" value="UniProtKB-ARBA"/>
</dbReference>
<dbReference type="GO" id="GO:0001708">
    <property type="term" value="P:cell fate specification"/>
    <property type="evidence" value="ECO:0007669"/>
    <property type="project" value="TreeGrafter"/>
</dbReference>
<dbReference type="GO" id="GO:0007267">
    <property type="term" value="P:cell-cell signaling"/>
    <property type="evidence" value="ECO:0007669"/>
    <property type="project" value="InterPro"/>
</dbReference>
<dbReference type="GO" id="GO:0007417">
    <property type="term" value="P:central nervous system development"/>
    <property type="evidence" value="ECO:0007669"/>
    <property type="project" value="UniProtKB-ARBA"/>
</dbReference>
<dbReference type="GO" id="GO:0030182">
    <property type="term" value="P:neuron differentiation"/>
    <property type="evidence" value="ECO:0007669"/>
    <property type="project" value="UniProtKB-ARBA"/>
</dbReference>
<dbReference type="GO" id="GO:0006508">
    <property type="term" value="P:proteolysis"/>
    <property type="evidence" value="ECO:0007669"/>
    <property type="project" value="UniProtKB-KW"/>
</dbReference>
<dbReference type="GO" id="GO:0010468">
    <property type="term" value="P:regulation of gene expression"/>
    <property type="evidence" value="ECO:0007669"/>
    <property type="project" value="TreeGrafter"/>
</dbReference>
<dbReference type="GO" id="GO:0007224">
    <property type="term" value="P:smoothened signaling pathway"/>
    <property type="evidence" value="ECO:0007669"/>
    <property type="project" value="TreeGrafter"/>
</dbReference>
<dbReference type="GO" id="GO:0009888">
    <property type="term" value="P:tissue development"/>
    <property type="evidence" value="ECO:0007669"/>
    <property type="project" value="UniProtKB-ARBA"/>
</dbReference>
<dbReference type="Gene3D" id="3.30.1380.10">
    <property type="match status" value="1"/>
</dbReference>
<dbReference type="InterPro" id="IPR001657">
    <property type="entry name" value="Hedgehog"/>
</dbReference>
<dbReference type="InterPro" id="IPR009045">
    <property type="entry name" value="Hedgehog_sig/DD-Pept_Zn-bd_sf"/>
</dbReference>
<dbReference type="InterPro" id="IPR050387">
    <property type="entry name" value="Hedgehog_Signaling"/>
</dbReference>
<dbReference type="InterPro" id="IPR000320">
    <property type="entry name" value="Hedgehog_signalling_dom"/>
</dbReference>
<dbReference type="PANTHER" id="PTHR11889">
    <property type="entry name" value="HEDGEHOG"/>
    <property type="match status" value="1"/>
</dbReference>
<dbReference type="PANTHER" id="PTHR11889:SF36">
    <property type="entry name" value="SONIC HEDGEHOG PROTEIN"/>
    <property type="match status" value="1"/>
</dbReference>
<dbReference type="Pfam" id="PF01085">
    <property type="entry name" value="HH_signal"/>
    <property type="match status" value="1"/>
</dbReference>
<dbReference type="PRINTS" id="PR00632">
    <property type="entry name" value="SONICHHOG"/>
</dbReference>
<dbReference type="SUPFAM" id="SSF55166">
    <property type="entry name" value="Hedgehog/DD-peptidase"/>
    <property type="match status" value="1"/>
</dbReference>
<organism>
    <name type="scientific">Amblypharyngodon chulabhornae</name>
    <dbReference type="NCBI Taxonomy" id="38661"/>
    <lineage>
        <taxon>Eukaryota</taxon>
        <taxon>Metazoa</taxon>
        <taxon>Chordata</taxon>
        <taxon>Craniata</taxon>
        <taxon>Vertebrata</taxon>
        <taxon>Euteleostomi</taxon>
        <taxon>Actinopterygii</taxon>
        <taxon>Neopterygii</taxon>
        <taxon>Teleostei</taxon>
        <taxon>Ostariophysi</taxon>
        <taxon>Cypriniformes</taxon>
        <taxon>Danionidae</taxon>
        <taxon>Rasborinae</taxon>
        <taxon>Amblypharyngodon</taxon>
    </lineage>
</organism>
<name>SHH_AMBCH</name>